<dbReference type="EMBL" id="CP000247">
    <property type="protein sequence ID" value="ABG71369.1"/>
    <property type="molecule type" value="Genomic_DNA"/>
</dbReference>
<dbReference type="RefSeq" id="WP_001238917.1">
    <property type="nucleotide sequence ID" value="NC_008253.1"/>
</dbReference>
<dbReference type="SMR" id="Q0TCG0"/>
<dbReference type="GeneID" id="93778686"/>
<dbReference type="KEGG" id="ecp:ECP_3389"/>
<dbReference type="HOGENOM" id="CLU_055188_4_2_6"/>
<dbReference type="Proteomes" id="UP000009182">
    <property type="component" value="Chromosome"/>
</dbReference>
<dbReference type="GO" id="GO:0022625">
    <property type="term" value="C:cytosolic large ribosomal subunit"/>
    <property type="evidence" value="ECO:0007669"/>
    <property type="project" value="TreeGrafter"/>
</dbReference>
<dbReference type="GO" id="GO:0019843">
    <property type="term" value="F:rRNA binding"/>
    <property type="evidence" value="ECO:0007669"/>
    <property type="project" value="UniProtKB-UniRule"/>
</dbReference>
<dbReference type="GO" id="GO:0003735">
    <property type="term" value="F:structural constituent of ribosome"/>
    <property type="evidence" value="ECO:0007669"/>
    <property type="project" value="InterPro"/>
</dbReference>
<dbReference type="GO" id="GO:0006412">
    <property type="term" value="P:translation"/>
    <property type="evidence" value="ECO:0007669"/>
    <property type="project" value="UniProtKB-UniRule"/>
</dbReference>
<dbReference type="FunFam" id="3.100.10.10:FF:000003">
    <property type="entry name" value="50S ribosomal protein L15"/>
    <property type="match status" value="1"/>
</dbReference>
<dbReference type="Gene3D" id="3.100.10.10">
    <property type="match status" value="1"/>
</dbReference>
<dbReference type="HAMAP" id="MF_01341">
    <property type="entry name" value="Ribosomal_uL15"/>
    <property type="match status" value="1"/>
</dbReference>
<dbReference type="InterPro" id="IPR030878">
    <property type="entry name" value="Ribosomal_uL15"/>
</dbReference>
<dbReference type="InterPro" id="IPR021131">
    <property type="entry name" value="Ribosomal_uL15/eL18"/>
</dbReference>
<dbReference type="InterPro" id="IPR036227">
    <property type="entry name" value="Ribosomal_uL15/eL18_sf"/>
</dbReference>
<dbReference type="InterPro" id="IPR005749">
    <property type="entry name" value="Ribosomal_uL15_bac-type"/>
</dbReference>
<dbReference type="InterPro" id="IPR001196">
    <property type="entry name" value="Ribosomal_uL15_CS"/>
</dbReference>
<dbReference type="NCBIfam" id="TIGR01071">
    <property type="entry name" value="rplO_bact"/>
    <property type="match status" value="1"/>
</dbReference>
<dbReference type="PANTHER" id="PTHR12934">
    <property type="entry name" value="50S RIBOSOMAL PROTEIN L15"/>
    <property type="match status" value="1"/>
</dbReference>
<dbReference type="PANTHER" id="PTHR12934:SF11">
    <property type="entry name" value="LARGE RIBOSOMAL SUBUNIT PROTEIN UL15M"/>
    <property type="match status" value="1"/>
</dbReference>
<dbReference type="Pfam" id="PF00828">
    <property type="entry name" value="Ribosomal_L27A"/>
    <property type="match status" value="1"/>
</dbReference>
<dbReference type="SUPFAM" id="SSF52080">
    <property type="entry name" value="Ribosomal proteins L15p and L18e"/>
    <property type="match status" value="1"/>
</dbReference>
<dbReference type="PROSITE" id="PS00475">
    <property type="entry name" value="RIBOSOMAL_L15"/>
    <property type="match status" value="1"/>
</dbReference>
<feature type="chain" id="PRO_0000251513" description="Large ribosomal subunit protein uL15">
    <location>
        <begin position="1"/>
        <end position="144"/>
    </location>
</feature>
<feature type="region of interest" description="Disordered" evidence="2">
    <location>
        <begin position="1"/>
        <end position="54"/>
    </location>
</feature>
<feature type="compositionally biased region" description="Gly residues" evidence="2">
    <location>
        <begin position="21"/>
        <end position="31"/>
    </location>
</feature>
<evidence type="ECO:0000255" key="1">
    <source>
        <dbReference type="HAMAP-Rule" id="MF_01341"/>
    </source>
</evidence>
<evidence type="ECO:0000256" key="2">
    <source>
        <dbReference type="SAM" id="MobiDB-lite"/>
    </source>
</evidence>
<evidence type="ECO:0000305" key="3"/>
<sequence>MRLNTLSPAEGSKKAGKRLGRGIGSGLGKTGGRGHKGQKSRSGGGVRRGFEGGQMPLYRRLPKFGFTSRKAAITAEVRLSDLAKVEGGVVDLNTLKAANIIGIQIEFAKVILAGEVTTPVTVRGLRVTKGARAAIEAAGGKIEE</sequence>
<keyword id="KW-0687">Ribonucleoprotein</keyword>
<keyword id="KW-0689">Ribosomal protein</keyword>
<keyword id="KW-0694">RNA-binding</keyword>
<keyword id="KW-0699">rRNA-binding</keyword>
<gene>
    <name evidence="1" type="primary">rplO</name>
    <name type="ordered locus">ECP_3389</name>
</gene>
<comment type="function">
    <text evidence="1">Binds to the 23S rRNA.</text>
</comment>
<comment type="subunit">
    <text evidence="1">Part of the 50S ribosomal subunit.</text>
</comment>
<comment type="similarity">
    <text evidence="1">Belongs to the universal ribosomal protein uL15 family.</text>
</comment>
<organism>
    <name type="scientific">Escherichia coli O6:K15:H31 (strain 536 / UPEC)</name>
    <dbReference type="NCBI Taxonomy" id="362663"/>
    <lineage>
        <taxon>Bacteria</taxon>
        <taxon>Pseudomonadati</taxon>
        <taxon>Pseudomonadota</taxon>
        <taxon>Gammaproteobacteria</taxon>
        <taxon>Enterobacterales</taxon>
        <taxon>Enterobacteriaceae</taxon>
        <taxon>Escherichia</taxon>
    </lineage>
</organism>
<accession>Q0TCG0</accession>
<name>RL15_ECOL5</name>
<reference key="1">
    <citation type="journal article" date="2006" name="Mol. Microbiol.">
        <title>Role of pathogenicity island-associated integrases in the genome plasticity of uropathogenic Escherichia coli strain 536.</title>
        <authorList>
            <person name="Hochhut B."/>
            <person name="Wilde C."/>
            <person name="Balling G."/>
            <person name="Middendorf B."/>
            <person name="Dobrindt U."/>
            <person name="Brzuszkiewicz E."/>
            <person name="Gottschalk G."/>
            <person name="Carniel E."/>
            <person name="Hacker J."/>
        </authorList>
    </citation>
    <scope>NUCLEOTIDE SEQUENCE [LARGE SCALE GENOMIC DNA]</scope>
    <source>
        <strain>536 / UPEC</strain>
    </source>
</reference>
<proteinExistence type="inferred from homology"/>
<protein>
    <recommendedName>
        <fullName evidence="1">Large ribosomal subunit protein uL15</fullName>
    </recommendedName>
    <alternativeName>
        <fullName evidence="3">50S ribosomal protein L15</fullName>
    </alternativeName>
</protein>